<dbReference type="EC" id="3.1.15.-" evidence="1"/>
<dbReference type="EMBL" id="CP000563">
    <property type="protein sequence ID" value="ABN60080.1"/>
    <property type="molecule type" value="Genomic_DNA"/>
</dbReference>
<dbReference type="RefSeq" id="WP_006080044.1">
    <property type="nucleotide sequence ID" value="NC_009052.1"/>
</dbReference>
<dbReference type="SMR" id="A3D017"/>
<dbReference type="STRING" id="325240.Sbal_0551"/>
<dbReference type="GeneID" id="11773910"/>
<dbReference type="KEGG" id="sbl:Sbal_0551"/>
<dbReference type="HOGENOM" id="CLU_064761_2_0_6"/>
<dbReference type="OrthoDB" id="9801329at2"/>
<dbReference type="Proteomes" id="UP000001557">
    <property type="component" value="Chromosome"/>
</dbReference>
<dbReference type="GO" id="GO:0005737">
    <property type="term" value="C:cytoplasm"/>
    <property type="evidence" value="ECO:0007669"/>
    <property type="project" value="UniProtKB-SubCell"/>
</dbReference>
<dbReference type="GO" id="GO:0000175">
    <property type="term" value="F:3'-5'-RNA exonuclease activity"/>
    <property type="evidence" value="ECO:0007669"/>
    <property type="project" value="InterPro"/>
</dbReference>
<dbReference type="GO" id="GO:0003676">
    <property type="term" value="F:nucleic acid binding"/>
    <property type="evidence" value="ECO:0007669"/>
    <property type="project" value="InterPro"/>
</dbReference>
<dbReference type="GO" id="GO:0006259">
    <property type="term" value="P:DNA metabolic process"/>
    <property type="evidence" value="ECO:0007669"/>
    <property type="project" value="UniProtKB-ARBA"/>
</dbReference>
<dbReference type="CDD" id="cd06135">
    <property type="entry name" value="Orn"/>
    <property type="match status" value="1"/>
</dbReference>
<dbReference type="FunFam" id="3.30.420.10:FF:000003">
    <property type="entry name" value="Oligoribonuclease"/>
    <property type="match status" value="1"/>
</dbReference>
<dbReference type="Gene3D" id="3.30.420.10">
    <property type="entry name" value="Ribonuclease H-like superfamily/Ribonuclease H"/>
    <property type="match status" value="1"/>
</dbReference>
<dbReference type="HAMAP" id="MF_00045">
    <property type="entry name" value="Oligoribonuclease"/>
    <property type="match status" value="1"/>
</dbReference>
<dbReference type="InterPro" id="IPR013520">
    <property type="entry name" value="Exonuclease_RNaseT/DNA_pol3"/>
</dbReference>
<dbReference type="InterPro" id="IPR022894">
    <property type="entry name" value="Oligoribonuclease"/>
</dbReference>
<dbReference type="InterPro" id="IPR012337">
    <property type="entry name" value="RNaseH-like_sf"/>
</dbReference>
<dbReference type="InterPro" id="IPR036397">
    <property type="entry name" value="RNaseH_sf"/>
</dbReference>
<dbReference type="NCBIfam" id="NF003765">
    <property type="entry name" value="PRK05359.1"/>
    <property type="match status" value="1"/>
</dbReference>
<dbReference type="PANTHER" id="PTHR11046">
    <property type="entry name" value="OLIGORIBONUCLEASE, MITOCHONDRIAL"/>
    <property type="match status" value="1"/>
</dbReference>
<dbReference type="PANTHER" id="PTHR11046:SF0">
    <property type="entry name" value="OLIGORIBONUCLEASE, MITOCHONDRIAL"/>
    <property type="match status" value="1"/>
</dbReference>
<dbReference type="Pfam" id="PF00929">
    <property type="entry name" value="RNase_T"/>
    <property type="match status" value="1"/>
</dbReference>
<dbReference type="SMART" id="SM00479">
    <property type="entry name" value="EXOIII"/>
    <property type="match status" value="1"/>
</dbReference>
<dbReference type="SUPFAM" id="SSF53098">
    <property type="entry name" value="Ribonuclease H-like"/>
    <property type="match status" value="1"/>
</dbReference>
<gene>
    <name evidence="1" type="primary">orn</name>
    <name type="ordered locus">Sbal_0551</name>
</gene>
<reference key="1">
    <citation type="submission" date="2007-02" db="EMBL/GenBank/DDBJ databases">
        <title>Complete sequence of chromosome of Shewanella baltica OS155.</title>
        <authorList>
            <consortium name="US DOE Joint Genome Institute"/>
            <person name="Copeland A."/>
            <person name="Lucas S."/>
            <person name="Lapidus A."/>
            <person name="Barry K."/>
            <person name="Detter J.C."/>
            <person name="Glavina del Rio T."/>
            <person name="Hammon N."/>
            <person name="Israni S."/>
            <person name="Dalin E."/>
            <person name="Tice H."/>
            <person name="Pitluck S."/>
            <person name="Sims D.R."/>
            <person name="Brettin T."/>
            <person name="Bruce D."/>
            <person name="Han C."/>
            <person name="Tapia R."/>
            <person name="Brainard J."/>
            <person name="Schmutz J."/>
            <person name="Larimer F."/>
            <person name="Land M."/>
            <person name="Hauser L."/>
            <person name="Kyrpides N."/>
            <person name="Mikhailova N."/>
            <person name="Brettar I."/>
            <person name="Klappenbach J."/>
            <person name="Konstantinidis K."/>
            <person name="Rodrigues J."/>
            <person name="Tiedje J."/>
            <person name="Richardson P."/>
        </authorList>
    </citation>
    <scope>NUCLEOTIDE SEQUENCE [LARGE SCALE GENOMIC DNA]</scope>
    <source>
        <strain>OS155 / ATCC BAA-1091</strain>
    </source>
</reference>
<feature type="chain" id="PRO_1000004283" description="Oligoribonuclease">
    <location>
        <begin position="1"/>
        <end position="181"/>
    </location>
</feature>
<feature type="domain" description="Exonuclease" evidence="1">
    <location>
        <begin position="8"/>
        <end position="171"/>
    </location>
</feature>
<feature type="active site" evidence="1">
    <location>
        <position position="129"/>
    </location>
</feature>
<sequence>MTADVNNLIWIDLEMTGLEPDVDRIIEIATLVTDQELNIIGQGPVIAIHQSDDVLAAMDDWNQKHHGESGLIDRVRASQETEAQAVAKTIAFLEQYVPKGASPMCGNSIGQDRRFLNRYMRELEDYFHYRNVDVSTIKELVKRWSPETMAGFKKQNTHQALQDIQESIAELQYYRSKVFKI</sequence>
<organism>
    <name type="scientific">Shewanella baltica (strain OS155 / ATCC BAA-1091)</name>
    <dbReference type="NCBI Taxonomy" id="325240"/>
    <lineage>
        <taxon>Bacteria</taxon>
        <taxon>Pseudomonadati</taxon>
        <taxon>Pseudomonadota</taxon>
        <taxon>Gammaproteobacteria</taxon>
        <taxon>Alteromonadales</taxon>
        <taxon>Shewanellaceae</taxon>
        <taxon>Shewanella</taxon>
    </lineage>
</organism>
<name>ORN_SHEB5</name>
<evidence type="ECO:0000255" key="1">
    <source>
        <dbReference type="HAMAP-Rule" id="MF_00045"/>
    </source>
</evidence>
<keyword id="KW-0963">Cytoplasm</keyword>
<keyword id="KW-0269">Exonuclease</keyword>
<keyword id="KW-0378">Hydrolase</keyword>
<keyword id="KW-0540">Nuclease</keyword>
<keyword id="KW-1185">Reference proteome</keyword>
<accession>A3D017</accession>
<protein>
    <recommendedName>
        <fullName evidence="1">Oligoribonuclease</fullName>
        <ecNumber evidence="1">3.1.15.-</ecNumber>
    </recommendedName>
</protein>
<proteinExistence type="inferred from homology"/>
<comment type="function">
    <text evidence="1">3'-to-5' exoribonuclease specific for small oligoribonucleotides.</text>
</comment>
<comment type="subcellular location">
    <subcellularLocation>
        <location evidence="1">Cytoplasm</location>
    </subcellularLocation>
</comment>
<comment type="similarity">
    <text evidence="1">Belongs to the oligoribonuclease family.</text>
</comment>